<keyword id="KW-0274">FAD</keyword>
<keyword id="KW-0285">Flavoprotein</keyword>
<keyword id="KW-0560">Oxidoreductase</keyword>
<keyword id="KW-0816">Tricarboxylic acid cycle</keyword>
<dbReference type="EC" id="1.1.5.4" evidence="1"/>
<dbReference type="EMBL" id="CP000551">
    <property type="protein sequence ID" value="ABM69758.1"/>
    <property type="molecule type" value="Genomic_DNA"/>
</dbReference>
<dbReference type="RefSeq" id="WP_011817926.1">
    <property type="nucleotide sequence ID" value="NC_008816.1"/>
</dbReference>
<dbReference type="SMR" id="A2BPP7"/>
<dbReference type="STRING" id="146891.A9601_04701"/>
<dbReference type="KEGG" id="pmb:A9601_04701"/>
<dbReference type="eggNOG" id="COG0579">
    <property type="taxonomic scope" value="Bacteria"/>
</dbReference>
<dbReference type="HOGENOM" id="CLU_028151_0_0_3"/>
<dbReference type="OrthoDB" id="9763983at2"/>
<dbReference type="UniPathway" id="UPA00223">
    <property type="reaction ID" value="UER01008"/>
</dbReference>
<dbReference type="Proteomes" id="UP000002590">
    <property type="component" value="Chromosome"/>
</dbReference>
<dbReference type="GO" id="GO:0047545">
    <property type="term" value="F:2-hydroxyglutarate dehydrogenase activity"/>
    <property type="evidence" value="ECO:0007669"/>
    <property type="project" value="TreeGrafter"/>
</dbReference>
<dbReference type="GO" id="GO:0008924">
    <property type="term" value="F:L-malate dehydrogenase (quinone) activity"/>
    <property type="evidence" value="ECO:0007669"/>
    <property type="project" value="UniProtKB-UniRule"/>
</dbReference>
<dbReference type="GO" id="GO:0006099">
    <property type="term" value="P:tricarboxylic acid cycle"/>
    <property type="evidence" value="ECO:0007669"/>
    <property type="project" value="UniProtKB-UniRule"/>
</dbReference>
<dbReference type="HAMAP" id="MF_00212">
    <property type="entry name" value="MQO"/>
    <property type="match status" value="1"/>
</dbReference>
<dbReference type="InterPro" id="IPR036188">
    <property type="entry name" value="FAD/NAD-bd_sf"/>
</dbReference>
<dbReference type="InterPro" id="IPR006231">
    <property type="entry name" value="MQO"/>
</dbReference>
<dbReference type="NCBIfam" id="NF003606">
    <property type="entry name" value="PRK05257.2-1"/>
    <property type="match status" value="1"/>
</dbReference>
<dbReference type="NCBIfam" id="NF003607">
    <property type="entry name" value="PRK05257.2-3"/>
    <property type="match status" value="1"/>
</dbReference>
<dbReference type="NCBIfam" id="NF003611">
    <property type="entry name" value="PRK05257.3-2"/>
    <property type="match status" value="1"/>
</dbReference>
<dbReference type="PANTHER" id="PTHR43104">
    <property type="entry name" value="L-2-HYDROXYGLUTARATE DEHYDROGENASE, MITOCHONDRIAL"/>
    <property type="match status" value="1"/>
</dbReference>
<dbReference type="PANTHER" id="PTHR43104:SF2">
    <property type="entry name" value="L-2-HYDROXYGLUTARATE DEHYDROGENASE, MITOCHONDRIAL"/>
    <property type="match status" value="1"/>
</dbReference>
<dbReference type="Pfam" id="PF06039">
    <property type="entry name" value="Mqo"/>
    <property type="match status" value="1"/>
</dbReference>
<dbReference type="SUPFAM" id="SSF51905">
    <property type="entry name" value="FAD/NAD(P)-binding domain"/>
    <property type="match status" value="1"/>
</dbReference>
<evidence type="ECO:0000255" key="1">
    <source>
        <dbReference type="HAMAP-Rule" id="MF_00212"/>
    </source>
</evidence>
<proteinExistence type="inferred from homology"/>
<organism>
    <name type="scientific">Prochlorococcus marinus (strain AS9601)</name>
    <dbReference type="NCBI Taxonomy" id="146891"/>
    <lineage>
        <taxon>Bacteria</taxon>
        <taxon>Bacillati</taxon>
        <taxon>Cyanobacteriota</taxon>
        <taxon>Cyanophyceae</taxon>
        <taxon>Synechococcales</taxon>
        <taxon>Prochlorococcaceae</taxon>
        <taxon>Prochlorococcus</taxon>
    </lineage>
</organism>
<accession>A2BPP7</accession>
<gene>
    <name evidence="1" type="primary">mqo</name>
    <name type="ordered locus">A9601_04701</name>
</gene>
<sequence>MTSSKNPTNDNSYFDAVLVGAGIMSSTLALLISEVLPDIKFLILEKLNAPGSESTGAFNNAGTGHAANCELNYTPLDEKGNLIIDKALSINRSFETSMSLWASLYEAGKIDIKKFLKFIPHISFVSGQDNISFLKKRFQKMTENPEFIDMEFSTSFDEISSWAPLITKDRNPSTQIAATRIDRGTDINFEALTKEYLSLVSLNKNVEIRYKTELVDLKKIDKKQWELEISSEGRKTSIRSGYVFLGAGGKTINYLQKSKIPEAKSYGGFPVSGKWLICEKKDLTEKHNSKVYGKADIGSPPMSVPHLDTRWIDNKKLLLYGPFAGFTTKFLKQSSYFDLFSSIKKNNIFSMLDVGFKNNDLINYLISQSLKNHNSRVENLKNMMPSANPSDWYLKNAGQRVQIIKKTEGGGSLKFGTEIVNSSDGSLSALLGASPGASTAVSIMVEVLEKSVLFLNDKHNLQKKINDLIYPELSVSENYSTFIKEIKKRNNSIFGFHP</sequence>
<feature type="chain" id="PRO_0000325505" description="Probable malate:quinone oxidoreductase">
    <location>
        <begin position="1"/>
        <end position="498"/>
    </location>
</feature>
<protein>
    <recommendedName>
        <fullName evidence="1">Probable malate:quinone oxidoreductase</fullName>
        <ecNumber evidence="1">1.1.5.4</ecNumber>
    </recommendedName>
    <alternativeName>
        <fullName evidence="1">MQO</fullName>
    </alternativeName>
    <alternativeName>
        <fullName evidence="1">Malate dehydrogenase [quinone]</fullName>
    </alternativeName>
</protein>
<name>MQO_PROMS</name>
<comment type="catalytic activity">
    <reaction evidence="1">
        <text>(S)-malate + a quinone = a quinol + oxaloacetate</text>
        <dbReference type="Rhea" id="RHEA:46012"/>
        <dbReference type="ChEBI" id="CHEBI:15589"/>
        <dbReference type="ChEBI" id="CHEBI:16452"/>
        <dbReference type="ChEBI" id="CHEBI:24646"/>
        <dbReference type="ChEBI" id="CHEBI:132124"/>
        <dbReference type="EC" id="1.1.5.4"/>
    </reaction>
</comment>
<comment type="cofactor">
    <cofactor evidence="1">
        <name>FAD</name>
        <dbReference type="ChEBI" id="CHEBI:57692"/>
    </cofactor>
</comment>
<comment type="pathway">
    <text evidence="1">Carbohydrate metabolism; tricarboxylic acid cycle; oxaloacetate from (S)-malate (quinone route): step 1/1.</text>
</comment>
<comment type="similarity">
    <text evidence="1">Belongs to the MQO family.</text>
</comment>
<reference key="1">
    <citation type="journal article" date="2007" name="PLoS Genet.">
        <title>Patterns and implications of gene gain and loss in the evolution of Prochlorococcus.</title>
        <authorList>
            <person name="Kettler G.C."/>
            <person name="Martiny A.C."/>
            <person name="Huang K."/>
            <person name="Zucker J."/>
            <person name="Coleman M.L."/>
            <person name="Rodrigue S."/>
            <person name="Chen F."/>
            <person name="Lapidus A."/>
            <person name="Ferriera S."/>
            <person name="Johnson J."/>
            <person name="Steglich C."/>
            <person name="Church G.M."/>
            <person name="Richardson P."/>
            <person name="Chisholm S.W."/>
        </authorList>
    </citation>
    <scope>NUCLEOTIDE SEQUENCE [LARGE SCALE GENOMIC DNA]</scope>
    <source>
        <strain>AS9601</strain>
    </source>
</reference>